<name>Y1150_BACCR</name>
<organism>
    <name type="scientific">Bacillus cereus (strain ATCC 14579 / DSM 31 / CCUG 7414 / JCM 2152 / NBRC 15305 / NCIMB 9373 / NCTC 2599 / NRRL B-3711)</name>
    <dbReference type="NCBI Taxonomy" id="226900"/>
    <lineage>
        <taxon>Bacteria</taxon>
        <taxon>Bacillati</taxon>
        <taxon>Bacillota</taxon>
        <taxon>Bacilli</taxon>
        <taxon>Bacillales</taxon>
        <taxon>Bacillaceae</taxon>
        <taxon>Bacillus</taxon>
        <taxon>Bacillus cereus group</taxon>
    </lineage>
</organism>
<evidence type="ECO:0000255" key="1">
    <source>
        <dbReference type="HAMAP-Rule" id="MF_01536"/>
    </source>
</evidence>
<accession>Q81GP1</accession>
<comment type="subcellular location">
    <subcellularLocation>
        <location evidence="1">Cell membrane</location>
        <topology evidence="1">Multi-pass membrane protein</topology>
    </subcellularLocation>
</comment>
<comment type="similarity">
    <text evidence="1">Belongs to the UPF0344 family.</text>
</comment>
<protein>
    <recommendedName>
        <fullName evidence="1">UPF0344 protein BC_1150</fullName>
    </recommendedName>
</protein>
<gene>
    <name type="ordered locus">BC_1150</name>
</gene>
<feature type="chain" id="PRO_0000105880" description="UPF0344 protein BC_1150">
    <location>
        <begin position="1"/>
        <end position="121"/>
    </location>
</feature>
<feature type="transmembrane region" description="Helical" evidence="1">
    <location>
        <begin position="6"/>
        <end position="26"/>
    </location>
</feature>
<feature type="transmembrane region" description="Helical" evidence="1">
    <location>
        <begin position="38"/>
        <end position="58"/>
    </location>
</feature>
<feature type="transmembrane region" description="Helical" evidence="1">
    <location>
        <begin position="65"/>
        <end position="85"/>
    </location>
</feature>
<feature type="transmembrane region" description="Helical" evidence="1">
    <location>
        <begin position="92"/>
        <end position="112"/>
    </location>
</feature>
<keyword id="KW-1003">Cell membrane</keyword>
<keyword id="KW-0472">Membrane</keyword>
<keyword id="KW-1185">Reference proteome</keyword>
<keyword id="KW-0812">Transmembrane</keyword>
<keyword id="KW-1133">Transmembrane helix</keyword>
<sequence>MVHMHITAWALGLILFFVAYSLYSAGRKGKGVHMGLRLMYIIIIVTGFMLYMSIVKTATGSMHMWYGLKMLAGILVIGGMEMVLVKMSKNKPTGAVWGLFIVALVAVFYLGLKLPIGWKVF</sequence>
<reference key="1">
    <citation type="journal article" date="2003" name="Nature">
        <title>Genome sequence of Bacillus cereus and comparative analysis with Bacillus anthracis.</title>
        <authorList>
            <person name="Ivanova N."/>
            <person name="Sorokin A."/>
            <person name="Anderson I."/>
            <person name="Galleron N."/>
            <person name="Candelon B."/>
            <person name="Kapatral V."/>
            <person name="Bhattacharyya A."/>
            <person name="Reznik G."/>
            <person name="Mikhailova N."/>
            <person name="Lapidus A."/>
            <person name="Chu L."/>
            <person name="Mazur M."/>
            <person name="Goltsman E."/>
            <person name="Larsen N."/>
            <person name="D'Souza M."/>
            <person name="Walunas T."/>
            <person name="Grechkin Y."/>
            <person name="Pusch G."/>
            <person name="Haselkorn R."/>
            <person name="Fonstein M."/>
            <person name="Ehrlich S.D."/>
            <person name="Overbeek R."/>
            <person name="Kyrpides N.C."/>
        </authorList>
    </citation>
    <scope>NUCLEOTIDE SEQUENCE [LARGE SCALE GENOMIC DNA]</scope>
    <source>
        <strain>ATCC 14579 / DSM 31 / CCUG 7414 / JCM 2152 / NBRC 15305 / NCIMB 9373 / NCTC 2599 / NRRL B-3711</strain>
    </source>
</reference>
<proteinExistence type="inferred from homology"/>
<dbReference type="EMBL" id="AE016877">
    <property type="protein sequence ID" value="AAP08137.1"/>
    <property type="molecule type" value="Genomic_DNA"/>
</dbReference>
<dbReference type="RefSeq" id="NP_830936.1">
    <property type="nucleotide sequence ID" value="NC_004722.1"/>
</dbReference>
<dbReference type="RefSeq" id="WP_000233494.1">
    <property type="nucleotide sequence ID" value="NZ_CP138336.1"/>
</dbReference>
<dbReference type="SMR" id="Q81GP1"/>
<dbReference type="STRING" id="226900.BC_1150"/>
<dbReference type="KEGG" id="bce:BC1150"/>
<dbReference type="PATRIC" id="fig|226900.8.peg.1114"/>
<dbReference type="HOGENOM" id="CLU_146641_1_1_9"/>
<dbReference type="OrthoDB" id="2365314at2"/>
<dbReference type="Proteomes" id="UP000001417">
    <property type="component" value="Chromosome"/>
</dbReference>
<dbReference type="GO" id="GO:0005886">
    <property type="term" value="C:plasma membrane"/>
    <property type="evidence" value="ECO:0007669"/>
    <property type="project" value="UniProtKB-SubCell"/>
</dbReference>
<dbReference type="HAMAP" id="MF_01536">
    <property type="entry name" value="UPF0344"/>
    <property type="match status" value="1"/>
</dbReference>
<dbReference type="InterPro" id="IPR010899">
    <property type="entry name" value="UPF0344"/>
</dbReference>
<dbReference type="NCBIfam" id="NF010194">
    <property type="entry name" value="PRK13673.1-1"/>
    <property type="match status" value="1"/>
</dbReference>
<dbReference type="Pfam" id="PF07457">
    <property type="entry name" value="DUF1516"/>
    <property type="match status" value="1"/>
</dbReference>